<gene>
    <name type="primary">RAD54</name>
    <name type="ordered locus">Os02g0762800</name>
    <name type="ordered locus">LOC_Os02g52510</name>
    <name type="ORF">OsJ_08484</name>
    <name type="ORF">P0486G03.23</name>
</gene>
<organism>
    <name type="scientific">Oryza sativa subsp. japonica</name>
    <name type="common">Rice</name>
    <dbReference type="NCBI Taxonomy" id="39947"/>
    <lineage>
        <taxon>Eukaryota</taxon>
        <taxon>Viridiplantae</taxon>
        <taxon>Streptophyta</taxon>
        <taxon>Embryophyta</taxon>
        <taxon>Tracheophyta</taxon>
        <taxon>Spermatophyta</taxon>
        <taxon>Magnoliopsida</taxon>
        <taxon>Liliopsida</taxon>
        <taxon>Poales</taxon>
        <taxon>Poaceae</taxon>
        <taxon>BOP clade</taxon>
        <taxon>Oryzoideae</taxon>
        <taxon>Oryzeae</taxon>
        <taxon>Oryzinae</taxon>
        <taxon>Oryza</taxon>
        <taxon>Oryza sativa</taxon>
    </lineage>
</organism>
<feature type="chain" id="PRO_0000418426" description="DNA repair and recombination protein RAD54">
    <location>
        <begin position="1"/>
        <end position="980"/>
    </location>
</feature>
<feature type="domain" description="Helicase ATP-binding" evidence="2">
    <location>
        <begin position="253"/>
        <end position="426"/>
    </location>
</feature>
<feature type="domain" description="Helicase C-terminal" evidence="3">
    <location>
        <begin position="593"/>
        <end position="758"/>
    </location>
</feature>
<feature type="region of interest" description="Disordered" evidence="4">
    <location>
        <begin position="1"/>
        <end position="106"/>
    </location>
</feature>
<feature type="region of interest" description="Disordered" evidence="4">
    <location>
        <begin position="828"/>
        <end position="848"/>
    </location>
</feature>
<feature type="region of interest" description="Disordered" evidence="4">
    <location>
        <begin position="950"/>
        <end position="980"/>
    </location>
</feature>
<feature type="short sequence motif" description="DEAH box">
    <location>
        <begin position="377"/>
        <end position="380"/>
    </location>
</feature>
<feature type="compositionally biased region" description="Acidic residues" evidence="4">
    <location>
        <begin position="15"/>
        <end position="50"/>
    </location>
</feature>
<feature type="compositionally biased region" description="Polar residues" evidence="4">
    <location>
        <begin position="951"/>
        <end position="962"/>
    </location>
</feature>
<feature type="binding site" evidence="2">
    <location>
        <begin position="266"/>
        <end position="273"/>
    </location>
    <ligand>
        <name>ATP</name>
        <dbReference type="ChEBI" id="CHEBI:30616"/>
    </ligand>
</feature>
<accession>A4PBL4</accession>
<accession>A0A0P0VPW7</accession>
<accession>B9F345</accession>
<accession>Q0DXB7</accession>
<accession>Q6Z6G1</accession>
<dbReference type="EC" id="3.6.4.-"/>
<dbReference type="EMBL" id="AB240577">
    <property type="protein sequence ID" value="BAF56217.1"/>
    <property type="molecule type" value="mRNA"/>
</dbReference>
<dbReference type="EMBL" id="AP005002">
    <property type="protein sequence ID" value="BAD17217.1"/>
    <property type="status" value="ALT_SEQ"/>
    <property type="molecule type" value="Genomic_DNA"/>
</dbReference>
<dbReference type="EMBL" id="AP008208">
    <property type="protein sequence ID" value="BAF10121.2"/>
    <property type="status" value="ALT_SEQ"/>
    <property type="molecule type" value="Genomic_DNA"/>
</dbReference>
<dbReference type="EMBL" id="AP014958">
    <property type="protein sequence ID" value="BAS81046.1"/>
    <property type="molecule type" value="Genomic_DNA"/>
</dbReference>
<dbReference type="EMBL" id="CM000139">
    <property type="protein sequence ID" value="EEE57852.1"/>
    <property type="status" value="ALT_SEQ"/>
    <property type="molecule type" value="Genomic_DNA"/>
</dbReference>
<dbReference type="RefSeq" id="XP_015623131.1">
    <property type="nucleotide sequence ID" value="XM_015767645.1"/>
</dbReference>
<dbReference type="RefSeq" id="XP_015623132.1">
    <property type="nucleotide sequence ID" value="XM_015767646.1"/>
</dbReference>
<dbReference type="RefSeq" id="XP_015623133.1">
    <property type="nucleotide sequence ID" value="XM_015767647.1"/>
</dbReference>
<dbReference type="RefSeq" id="XP_015623134.1">
    <property type="nucleotide sequence ID" value="XM_015767648.1"/>
</dbReference>
<dbReference type="RefSeq" id="XP_015623135.1">
    <property type="nucleotide sequence ID" value="XM_015767649.1"/>
</dbReference>
<dbReference type="SMR" id="A4PBL4"/>
<dbReference type="FunCoup" id="A4PBL4">
    <property type="interactions" value="1225"/>
</dbReference>
<dbReference type="IntAct" id="A4PBL4">
    <property type="interactions" value="1"/>
</dbReference>
<dbReference type="STRING" id="39947.A4PBL4"/>
<dbReference type="PaxDb" id="39947-A4PBL4"/>
<dbReference type="EnsemblPlants" id="Os02t0762800-01">
    <property type="protein sequence ID" value="Os02t0762800-01"/>
    <property type="gene ID" value="Os02g0762800"/>
</dbReference>
<dbReference type="Gramene" id="Os02t0762800-01">
    <property type="protein sequence ID" value="Os02t0762800-01"/>
    <property type="gene ID" value="Os02g0762800"/>
</dbReference>
<dbReference type="KEGG" id="dosa:Os02g0762800"/>
<dbReference type="eggNOG" id="KOG0390">
    <property type="taxonomic scope" value="Eukaryota"/>
</dbReference>
<dbReference type="HOGENOM" id="CLU_000315_10_4_1"/>
<dbReference type="InParanoid" id="A4PBL4"/>
<dbReference type="OMA" id="CKIEFRD"/>
<dbReference type="OrthoDB" id="413460at2759"/>
<dbReference type="Proteomes" id="UP000000763">
    <property type="component" value="Chromosome 2"/>
</dbReference>
<dbReference type="Proteomes" id="UP000007752">
    <property type="component" value="Chromosome 2"/>
</dbReference>
<dbReference type="Proteomes" id="UP000059680">
    <property type="component" value="Chromosome 2"/>
</dbReference>
<dbReference type="GO" id="GO:0005634">
    <property type="term" value="C:nucleus"/>
    <property type="evidence" value="ECO:0000318"/>
    <property type="project" value="GO_Central"/>
</dbReference>
<dbReference type="GO" id="GO:0005524">
    <property type="term" value="F:ATP binding"/>
    <property type="evidence" value="ECO:0007669"/>
    <property type="project" value="UniProtKB-KW"/>
</dbReference>
<dbReference type="GO" id="GO:0003677">
    <property type="term" value="F:DNA binding"/>
    <property type="evidence" value="ECO:0007669"/>
    <property type="project" value="UniProtKB-KW"/>
</dbReference>
<dbReference type="GO" id="GO:0015616">
    <property type="term" value="F:DNA translocase activity"/>
    <property type="evidence" value="ECO:0000318"/>
    <property type="project" value="GO_Central"/>
</dbReference>
<dbReference type="GO" id="GO:0004386">
    <property type="term" value="F:helicase activity"/>
    <property type="evidence" value="ECO:0007669"/>
    <property type="project" value="UniProtKB-KW"/>
</dbReference>
<dbReference type="GO" id="GO:0016787">
    <property type="term" value="F:hydrolase activity"/>
    <property type="evidence" value="ECO:0007669"/>
    <property type="project" value="UniProtKB-KW"/>
</dbReference>
<dbReference type="GO" id="GO:0051301">
    <property type="term" value="P:cell division"/>
    <property type="evidence" value="ECO:0007669"/>
    <property type="project" value="UniProtKB-KW"/>
</dbReference>
<dbReference type="GO" id="GO:0045003">
    <property type="term" value="P:double-strand break repair via synthesis-dependent strand annealing"/>
    <property type="evidence" value="ECO:0000318"/>
    <property type="project" value="GO_Central"/>
</dbReference>
<dbReference type="GO" id="GO:0007131">
    <property type="term" value="P:reciprocal meiotic recombination"/>
    <property type="evidence" value="ECO:0000318"/>
    <property type="project" value="GO_Central"/>
</dbReference>
<dbReference type="CDD" id="cd18004">
    <property type="entry name" value="DEXHc_RAD54"/>
    <property type="match status" value="1"/>
</dbReference>
<dbReference type="CDD" id="cd18793">
    <property type="entry name" value="SF2_C_SNF"/>
    <property type="match status" value="1"/>
</dbReference>
<dbReference type="FunFam" id="3.40.50.10810:FF:000021">
    <property type="entry name" value="DNA repair and recombination protein RAD54"/>
    <property type="match status" value="1"/>
</dbReference>
<dbReference type="FunFam" id="3.40.50.300:FF:000332">
    <property type="entry name" value="DNA repair and recombination protein RAD54-like"/>
    <property type="match status" value="1"/>
</dbReference>
<dbReference type="FunFam" id="1.20.120.850:FF:000028">
    <property type="entry name" value="Predicted protein"/>
    <property type="match status" value="1"/>
</dbReference>
<dbReference type="Gene3D" id="3.40.50.300">
    <property type="entry name" value="P-loop containing nucleotide triphosphate hydrolases"/>
    <property type="match status" value="1"/>
</dbReference>
<dbReference type="Gene3D" id="1.20.120.850">
    <property type="entry name" value="SWI2/SNF2 ATPases, N-terminal domain"/>
    <property type="match status" value="1"/>
</dbReference>
<dbReference type="Gene3D" id="3.40.50.10810">
    <property type="entry name" value="Tandem AAA-ATPase domain"/>
    <property type="match status" value="1"/>
</dbReference>
<dbReference type="InterPro" id="IPR014001">
    <property type="entry name" value="Helicase_ATP-bd"/>
</dbReference>
<dbReference type="InterPro" id="IPR001650">
    <property type="entry name" value="Helicase_C-like"/>
</dbReference>
<dbReference type="InterPro" id="IPR027417">
    <property type="entry name" value="P-loop_NTPase"/>
</dbReference>
<dbReference type="InterPro" id="IPR038718">
    <property type="entry name" value="SNF2-like_sf"/>
</dbReference>
<dbReference type="InterPro" id="IPR049730">
    <property type="entry name" value="SNF2/RAD54-like_C"/>
</dbReference>
<dbReference type="InterPro" id="IPR000330">
    <property type="entry name" value="SNF2_N"/>
</dbReference>
<dbReference type="InterPro" id="IPR050496">
    <property type="entry name" value="SNF2_RAD54_helicase_repair"/>
</dbReference>
<dbReference type="PANTHER" id="PTHR45629:SF7">
    <property type="entry name" value="DNA EXCISION REPAIR PROTEIN ERCC-6-RELATED"/>
    <property type="match status" value="1"/>
</dbReference>
<dbReference type="PANTHER" id="PTHR45629">
    <property type="entry name" value="SNF2/RAD54 FAMILY MEMBER"/>
    <property type="match status" value="1"/>
</dbReference>
<dbReference type="Pfam" id="PF00271">
    <property type="entry name" value="Helicase_C"/>
    <property type="match status" value="1"/>
</dbReference>
<dbReference type="Pfam" id="PF00176">
    <property type="entry name" value="SNF2-rel_dom"/>
    <property type="match status" value="1"/>
</dbReference>
<dbReference type="SMART" id="SM00487">
    <property type="entry name" value="DEXDc"/>
    <property type="match status" value="1"/>
</dbReference>
<dbReference type="SMART" id="SM00490">
    <property type="entry name" value="HELICc"/>
    <property type="match status" value="1"/>
</dbReference>
<dbReference type="SUPFAM" id="SSF52540">
    <property type="entry name" value="P-loop containing nucleoside triphosphate hydrolases"/>
    <property type="match status" value="2"/>
</dbReference>
<dbReference type="PROSITE" id="PS51192">
    <property type="entry name" value="HELICASE_ATP_BIND_1"/>
    <property type="match status" value="1"/>
</dbReference>
<dbReference type="PROSITE" id="PS51194">
    <property type="entry name" value="HELICASE_CTER"/>
    <property type="match status" value="1"/>
</dbReference>
<protein>
    <recommendedName>
        <fullName>DNA repair and recombination protein RAD54</fullName>
        <shortName>OsRad54</shortName>
        <ecNumber>3.6.4.-</ecNumber>
    </recommendedName>
</protein>
<name>RAD54_ORYSJ</name>
<sequence length="980" mass="108302">MPSTSKCNRISRVADEEEEEEIVAVSSDADESESESEVGSGAEEEDDDYVGESSDSAGGSGSGSGDGDGDEEGGRSDIGDGEGEGGGRRVRSACRGVRANDRERKSQNVDALVRGNLVVRRQPLIPRILSVSDAAAIARKPFKPPCQNGYSENNEQLARRLSARKRFVPWGSVQPFAVTNILPQSPAVSSDDSVENEESLPPGIEPLILWQPEGRDKENSNFSAIKVDHLLVRYLRPHQREGVQFMFDCVSGLLNDDGISGCILADDMGLGKTLQSITLLYTLLCQGFDAKPMVKRAVVVTPTSLVSNWESEIIKWLKGRVQLLALCESTRADVLSGIESFLKPLSRLQVLIVSYETFRMHSSKFERPGSCDLLICDEAHRLKNDQTLTNKALAALPCKRRILLSGTPMQNDLEEFFSMVNFTNPGVLGDATYFRRYYEAPIICGREPTASAEEKNLGSERSAELSAKVNLFILRRTNALLSNHLPPKIVEVVCCKLTALQTALYNHFIHSKNVKRLISEGTKQSKVLAYITALKKLCNHPKLIYDTIKSNNSGGSGFDDCLRFFPPELFSGRSGSWTGGGGMWVELSGKMHVLARLLGHLRLKTDDRIVLVSNYTQTLDLFAQLCRERRYPYIRLDGATSINKRQKLVNQFNDPSRDEFVFLLSSKAGGCGLNLVGGNRLILFDPDWNPANDKQAAARVWRDGQKKRVYIYRFLSTGTIEEKVYQRQMSKEGLQKVIQQEQADGKMQGSSLSTEDLRDLFTFHEQIRSEIHENLKCNRCNKDGCMVLDGSKFDSAATEHEASNSGENSYIDIGGFGAISGCVQKMNSSNQQIGSPSEEDLGSWGHHSDPSTVPDTILQCSSGDEVSFVFTNQIDGKLVPVESMARAATHRTHEVTVNAEKEVGKINSSNVPGTERQSLLGKNLKMMGFNLKNSSMKFPTKSRRMLPNCLQGMNKTSTSSDHQQTKKLHVISDASDDDFV</sequence>
<evidence type="ECO:0000250" key="1"/>
<evidence type="ECO:0000255" key="2">
    <source>
        <dbReference type="PROSITE-ProRule" id="PRU00541"/>
    </source>
</evidence>
<evidence type="ECO:0000255" key="3">
    <source>
        <dbReference type="PROSITE-ProRule" id="PRU00542"/>
    </source>
</evidence>
<evidence type="ECO:0000256" key="4">
    <source>
        <dbReference type="SAM" id="MobiDB-lite"/>
    </source>
</evidence>
<evidence type="ECO:0000269" key="5">
    <source>
    </source>
</evidence>
<evidence type="ECO:0000305" key="6"/>
<keyword id="KW-0067">ATP-binding</keyword>
<keyword id="KW-0131">Cell cycle</keyword>
<keyword id="KW-0132">Cell division</keyword>
<keyword id="KW-0227">DNA damage</keyword>
<keyword id="KW-0234">DNA repair</keyword>
<keyword id="KW-0238">DNA-binding</keyword>
<keyword id="KW-0347">Helicase</keyword>
<keyword id="KW-0378">Hydrolase</keyword>
<keyword id="KW-0498">Mitosis</keyword>
<keyword id="KW-0547">Nucleotide-binding</keyword>
<keyword id="KW-0539">Nucleus</keyword>
<keyword id="KW-1185">Reference proteome</keyword>
<proteinExistence type="evidence at protein level"/>
<reference key="1">
    <citation type="journal article" date="2007" name="Plant Cell Physiol.">
        <title>Two alternatively spliced transcripts generated from OsMUS81, a rice homolog of yeast MUS81, are up-regulated by DNA-damaging treatments.</title>
        <authorList>
            <person name="Mimida N."/>
            <person name="Kitamoto H."/>
            <person name="Osakabe K."/>
            <person name="Nakashima M."/>
            <person name="Ito Y."/>
            <person name="Heyer W.D."/>
            <person name="Toki S."/>
            <person name="Ichikawa H."/>
        </authorList>
    </citation>
    <scope>NUCLEOTIDE SEQUENCE [MRNA]</scope>
    <scope>INTERACTION WITH MUS81</scope>
    <source>
        <strain>cv. Nipponbare</strain>
    </source>
</reference>
<reference key="2">
    <citation type="journal article" date="2005" name="Nature">
        <title>The map-based sequence of the rice genome.</title>
        <authorList>
            <consortium name="International rice genome sequencing project (IRGSP)"/>
        </authorList>
    </citation>
    <scope>NUCLEOTIDE SEQUENCE [LARGE SCALE GENOMIC DNA]</scope>
    <source>
        <strain>cv. Nipponbare</strain>
    </source>
</reference>
<reference key="3">
    <citation type="journal article" date="2008" name="Nucleic Acids Res.">
        <title>The rice annotation project database (RAP-DB): 2008 update.</title>
        <authorList>
            <consortium name="The rice annotation project (RAP)"/>
        </authorList>
    </citation>
    <scope>GENOME REANNOTATION</scope>
    <source>
        <strain>cv. Nipponbare</strain>
    </source>
</reference>
<reference key="4">
    <citation type="journal article" date="2013" name="Rice">
        <title>Improvement of the Oryza sativa Nipponbare reference genome using next generation sequence and optical map data.</title>
        <authorList>
            <person name="Kawahara Y."/>
            <person name="de la Bastide M."/>
            <person name="Hamilton J.P."/>
            <person name="Kanamori H."/>
            <person name="McCombie W.R."/>
            <person name="Ouyang S."/>
            <person name="Schwartz D.C."/>
            <person name="Tanaka T."/>
            <person name="Wu J."/>
            <person name="Zhou S."/>
            <person name="Childs K.L."/>
            <person name="Davidson R.M."/>
            <person name="Lin H."/>
            <person name="Quesada-Ocampo L."/>
            <person name="Vaillancourt B."/>
            <person name="Sakai H."/>
            <person name="Lee S.S."/>
            <person name="Kim J."/>
            <person name="Numa H."/>
            <person name="Itoh T."/>
            <person name="Buell C.R."/>
            <person name="Matsumoto T."/>
        </authorList>
    </citation>
    <scope>GENOME REANNOTATION</scope>
    <source>
        <strain>cv. Nipponbare</strain>
    </source>
</reference>
<reference key="5">
    <citation type="journal article" date="2005" name="PLoS Biol.">
        <title>The genomes of Oryza sativa: a history of duplications.</title>
        <authorList>
            <person name="Yu J."/>
            <person name="Wang J."/>
            <person name="Lin W."/>
            <person name="Li S."/>
            <person name="Li H."/>
            <person name="Zhou J."/>
            <person name="Ni P."/>
            <person name="Dong W."/>
            <person name="Hu S."/>
            <person name="Zeng C."/>
            <person name="Zhang J."/>
            <person name="Zhang Y."/>
            <person name="Li R."/>
            <person name="Xu Z."/>
            <person name="Li S."/>
            <person name="Li X."/>
            <person name="Zheng H."/>
            <person name="Cong L."/>
            <person name="Lin L."/>
            <person name="Yin J."/>
            <person name="Geng J."/>
            <person name="Li G."/>
            <person name="Shi J."/>
            <person name="Liu J."/>
            <person name="Lv H."/>
            <person name="Li J."/>
            <person name="Wang J."/>
            <person name="Deng Y."/>
            <person name="Ran L."/>
            <person name="Shi X."/>
            <person name="Wang X."/>
            <person name="Wu Q."/>
            <person name="Li C."/>
            <person name="Ren X."/>
            <person name="Wang J."/>
            <person name="Wang X."/>
            <person name="Li D."/>
            <person name="Liu D."/>
            <person name="Zhang X."/>
            <person name="Ji Z."/>
            <person name="Zhao W."/>
            <person name="Sun Y."/>
            <person name="Zhang Z."/>
            <person name="Bao J."/>
            <person name="Han Y."/>
            <person name="Dong L."/>
            <person name="Ji J."/>
            <person name="Chen P."/>
            <person name="Wu S."/>
            <person name="Liu J."/>
            <person name="Xiao Y."/>
            <person name="Bu D."/>
            <person name="Tan J."/>
            <person name="Yang L."/>
            <person name="Ye C."/>
            <person name="Zhang J."/>
            <person name="Xu J."/>
            <person name="Zhou Y."/>
            <person name="Yu Y."/>
            <person name="Zhang B."/>
            <person name="Zhuang S."/>
            <person name="Wei H."/>
            <person name="Liu B."/>
            <person name="Lei M."/>
            <person name="Yu H."/>
            <person name="Li Y."/>
            <person name="Xu H."/>
            <person name="Wei S."/>
            <person name="He X."/>
            <person name="Fang L."/>
            <person name="Zhang Z."/>
            <person name="Zhang Y."/>
            <person name="Huang X."/>
            <person name="Su Z."/>
            <person name="Tong W."/>
            <person name="Li J."/>
            <person name="Tong Z."/>
            <person name="Li S."/>
            <person name="Ye J."/>
            <person name="Wang L."/>
            <person name="Fang L."/>
            <person name="Lei T."/>
            <person name="Chen C.-S."/>
            <person name="Chen H.-C."/>
            <person name="Xu Z."/>
            <person name="Li H."/>
            <person name="Huang H."/>
            <person name="Zhang F."/>
            <person name="Xu H."/>
            <person name="Li N."/>
            <person name="Zhao C."/>
            <person name="Li S."/>
            <person name="Dong L."/>
            <person name="Huang Y."/>
            <person name="Li L."/>
            <person name="Xi Y."/>
            <person name="Qi Q."/>
            <person name="Li W."/>
            <person name="Zhang B."/>
            <person name="Hu W."/>
            <person name="Zhang Y."/>
            <person name="Tian X."/>
            <person name="Jiao Y."/>
            <person name="Liang X."/>
            <person name="Jin J."/>
            <person name="Gao L."/>
            <person name="Zheng W."/>
            <person name="Hao B."/>
            <person name="Liu S.-M."/>
            <person name="Wang W."/>
            <person name="Yuan L."/>
            <person name="Cao M."/>
            <person name="McDermott J."/>
            <person name="Samudrala R."/>
            <person name="Wang J."/>
            <person name="Wong G.K.-S."/>
            <person name="Yang H."/>
        </authorList>
    </citation>
    <scope>NUCLEOTIDE SEQUENCE [LARGE SCALE GENOMIC DNA]</scope>
    <source>
        <strain>cv. Nipponbare</strain>
    </source>
</reference>
<comment type="function">
    <text evidence="1">Involved in DNA repair and mitotic recombination.</text>
</comment>
<comment type="subunit">
    <text evidence="5">Interacts with MUS81.</text>
</comment>
<comment type="subcellular location">
    <subcellularLocation>
        <location evidence="6">Nucleus</location>
    </subcellularLocation>
</comment>
<comment type="similarity">
    <text evidence="6">Belongs to the SNF2/RAD54 helicase family.</text>
</comment>
<comment type="sequence caution" evidence="6">
    <conflict type="erroneous gene model prediction">
        <sequence resource="EMBL-CDS" id="BAD17217"/>
    </conflict>
</comment>
<comment type="sequence caution" evidence="6">
    <conflict type="erroneous gene model prediction">
        <sequence resource="EMBL-CDS" id="BAF10121"/>
    </conflict>
</comment>
<comment type="sequence caution" evidence="6">
    <conflict type="erroneous gene model prediction">
        <sequence resource="EMBL-CDS" id="EEE57852"/>
    </conflict>
</comment>